<dbReference type="EC" id="5.3.1.6" evidence="1 2"/>
<dbReference type="EMBL" id="BA000001">
    <property type="protein sequence ID" value="BAA30481.1"/>
    <property type="molecule type" value="Genomic_DNA"/>
</dbReference>
<dbReference type="PIR" id="A71010">
    <property type="entry name" value="A71010"/>
</dbReference>
<dbReference type="RefSeq" id="WP_010885464.1">
    <property type="nucleotide sequence ID" value="NC_000961.1"/>
</dbReference>
<dbReference type="PDB" id="1LK5">
    <property type="method" value="X-ray"/>
    <property type="resolution" value="1.75 A"/>
    <property type="chains" value="A/B/C/D=1-229"/>
</dbReference>
<dbReference type="PDB" id="1LK7">
    <property type="method" value="X-ray"/>
    <property type="resolution" value="2.00 A"/>
    <property type="chains" value="A/B/C/D=1-229"/>
</dbReference>
<dbReference type="PDBsum" id="1LK5"/>
<dbReference type="PDBsum" id="1LK7"/>
<dbReference type="SMR" id="O50083"/>
<dbReference type="IntAct" id="O50083">
    <property type="interactions" value="1"/>
</dbReference>
<dbReference type="MINT" id="O50083"/>
<dbReference type="STRING" id="70601.gene:9378351"/>
<dbReference type="EnsemblBacteria" id="BAA30481">
    <property type="protein sequence ID" value="BAA30481"/>
    <property type="gene ID" value="BAA30481"/>
</dbReference>
<dbReference type="GeneID" id="1443702"/>
<dbReference type="KEGG" id="pho:PH1375"/>
<dbReference type="eggNOG" id="arCOG01122">
    <property type="taxonomic scope" value="Archaea"/>
</dbReference>
<dbReference type="OrthoDB" id="19013at2157"/>
<dbReference type="BRENDA" id="5.3.1.6">
    <property type="organism ID" value="5244"/>
</dbReference>
<dbReference type="UniPathway" id="UPA00115">
    <property type="reaction ID" value="UER00412"/>
</dbReference>
<dbReference type="EvolutionaryTrace" id="O50083"/>
<dbReference type="Proteomes" id="UP000000752">
    <property type="component" value="Chromosome"/>
</dbReference>
<dbReference type="GO" id="GO:0005829">
    <property type="term" value="C:cytosol"/>
    <property type="evidence" value="ECO:0007669"/>
    <property type="project" value="TreeGrafter"/>
</dbReference>
<dbReference type="GO" id="GO:0004751">
    <property type="term" value="F:ribose-5-phosphate isomerase activity"/>
    <property type="evidence" value="ECO:0000314"/>
    <property type="project" value="UniProtKB"/>
</dbReference>
<dbReference type="GO" id="GO:0006014">
    <property type="term" value="P:D-ribose metabolic process"/>
    <property type="evidence" value="ECO:0007669"/>
    <property type="project" value="TreeGrafter"/>
</dbReference>
<dbReference type="GO" id="GO:0009052">
    <property type="term" value="P:pentose-phosphate shunt, non-oxidative branch"/>
    <property type="evidence" value="ECO:0000314"/>
    <property type="project" value="UniProtKB"/>
</dbReference>
<dbReference type="CDD" id="cd01398">
    <property type="entry name" value="RPI_A"/>
    <property type="match status" value="1"/>
</dbReference>
<dbReference type="FunFam" id="3.30.70.260:FF:000018">
    <property type="entry name" value="Ribose-5-phosphate isomerase A"/>
    <property type="match status" value="1"/>
</dbReference>
<dbReference type="FunFam" id="3.40.50.1360:FF:000001">
    <property type="entry name" value="Ribose-5-phosphate isomerase A"/>
    <property type="match status" value="1"/>
</dbReference>
<dbReference type="Gene3D" id="3.30.70.260">
    <property type="match status" value="1"/>
</dbReference>
<dbReference type="Gene3D" id="3.40.50.1360">
    <property type="match status" value="1"/>
</dbReference>
<dbReference type="HAMAP" id="MF_00170">
    <property type="entry name" value="Rib_5P_isom_A"/>
    <property type="match status" value="1"/>
</dbReference>
<dbReference type="InterPro" id="IPR037171">
    <property type="entry name" value="NagB/RpiA_transferase-like"/>
</dbReference>
<dbReference type="InterPro" id="IPR020672">
    <property type="entry name" value="Ribose5P_isomerase_typA_subgr"/>
</dbReference>
<dbReference type="InterPro" id="IPR004788">
    <property type="entry name" value="Ribose5P_isomerase_type_A"/>
</dbReference>
<dbReference type="NCBIfam" id="NF001924">
    <property type="entry name" value="PRK00702.1"/>
    <property type="match status" value="1"/>
</dbReference>
<dbReference type="NCBIfam" id="TIGR00021">
    <property type="entry name" value="rpiA"/>
    <property type="match status" value="1"/>
</dbReference>
<dbReference type="PANTHER" id="PTHR11934">
    <property type="entry name" value="RIBOSE-5-PHOSPHATE ISOMERASE"/>
    <property type="match status" value="1"/>
</dbReference>
<dbReference type="PANTHER" id="PTHR11934:SF0">
    <property type="entry name" value="RIBOSE-5-PHOSPHATE ISOMERASE"/>
    <property type="match status" value="1"/>
</dbReference>
<dbReference type="Pfam" id="PF06026">
    <property type="entry name" value="Rib_5-P_isom_A"/>
    <property type="match status" value="1"/>
</dbReference>
<dbReference type="SUPFAM" id="SSF75445">
    <property type="entry name" value="D-ribose-5-phosphate isomerase (RpiA), lid domain"/>
    <property type="match status" value="1"/>
</dbReference>
<dbReference type="SUPFAM" id="SSF100950">
    <property type="entry name" value="NagB/RpiA/CoA transferase-like"/>
    <property type="match status" value="1"/>
</dbReference>
<accession>O50083</accession>
<evidence type="ECO:0000255" key="1">
    <source>
        <dbReference type="HAMAP-Rule" id="MF_00170"/>
    </source>
</evidence>
<evidence type="ECO:0000269" key="2">
    <source>
    </source>
</evidence>
<evidence type="ECO:0000305" key="3">
    <source>
    </source>
</evidence>
<evidence type="ECO:0007744" key="4">
    <source>
        <dbReference type="PDB" id="1LK7"/>
    </source>
</evidence>
<evidence type="ECO:0007829" key="5">
    <source>
        <dbReference type="PDB" id="1LK5"/>
    </source>
</evidence>
<organism>
    <name type="scientific">Pyrococcus horikoshii (strain ATCC 700860 / DSM 12428 / JCM 9974 / NBRC 100139 / OT-3)</name>
    <dbReference type="NCBI Taxonomy" id="70601"/>
    <lineage>
        <taxon>Archaea</taxon>
        <taxon>Methanobacteriati</taxon>
        <taxon>Methanobacteriota</taxon>
        <taxon>Thermococci</taxon>
        <taxon>Thermococcales</taxon>
        <taxon>Thermococcaceae</taxon>
        <taxon>Pyrococcus</taxon>
    </lineage>
</organism>
<gene>
    <name evidence="1" type="primary">rpiA</name>
    <name type="ordered locus">PH1375</name>
</gene>
<comment type="function">
    <text evidence="2">Involved in the first step of the non-oxidative branch of the pentose phosphate pathway. It catalyzes the reversible conversion of ribose-5-phosphate to ribulose 5-phosphate.</text>
</comment>
<comment type="catalytic activity">
    <reaction evidence="1 2">
        <text>aldehydo-D-ribose 5-phosphate = D-ribulose 5-phosphate</text>
        <dbReference type="Rhea" id="RHEA:14657"/>
        <dbReference type="ChEBI" id="CHEBI:58121"/>
        <dbReference type="ChEBI" id="CHEBI:58273"/>
        <dbReference type="EC" id="5.3.1.6"/>
    </reaction>
</comment>
<comment type="activity regulation">
    <text evidence="2">Inhibited by D-4-phosphoerythronic acid.</text>
</comment>
<comment type="biophysicochemical properties">
    <kinetics>
        <KM evidence="2">1.17 mM for ribose 5-P</KM>
    </kinetics>
    <phDependence>
        <text evidence="2">Optimum pH is 6 (at 50 degrees Celsius).</text>
    </phDependence>
    <temperatureDependence>
        <text evidence="2">Optimum temperature is over 95 degrees Celsius.</text>
    </temperatureDependence>
</comment>
<comment type="pathway">
    <text evidence="1">Carbohydrate degradation; pentose phosphate pathway; D-ribose 5-phosphate from D-ribulose 5-phosphate (non-oxidative stage): step 1/1.</text>
</comment>
<comment type="subunit">
    <text evidence="2">Homotetramer.</text>
</comment>
<comment type="similarity">
    <text evidence="1">Belongs to the ribose 5-phosphate isomerase family.</text>
</comment>
<sequence length="229" mass="25162">MNVEEMKKIAAKEALKFIEDDMVIGLGTGSTTAYFIKLLGEKLKRGEISDIVGVPTSYQAKLLAIEHDIPIASLDQVDAIDVAVDGADEVDPNLNLIKGRGAALTMEKIIEYRAGTFIVLVDERKLVDYLCQKMPVPIEVIPQAWKAIIEELSIFNAKAELRMGVNKDGPVITDNGNFIIDAKFPRIDDPLDMEIELNTIPGVIENGIFADIADIVIVGTREGVKKLER</sequence>
<reference key="1">
    <citation type="journal article" date="1998" name="DNA Res.">
        <title>Complete sequence and gene organization of the genome of a hyper-thermophilic archaebacterium, Pyrococcus horikoshii OT3.</title>
        <authorList>
            <person name="Kawarabayasi Y."/>
            <person name="Sawada M."/>
            <person name="Horikawa H."/>
            <person name="Haikawa Y."/>
            <person name="Hino Y."/>
            <person name="Yamamoto S."/>
            <person name="Sekine M."/>
            <person name="Baba S."/>
            <person name="Kosugi H."/>
            <person name="Hosoyama A."/>
            <person name="Nagai Y."/>
            <person name="Sakai M."/>
            <person name="Ogura K."/>
            <person name="Otsuka R."/>
            <person name="Nakazawa H."/>
            <person name="Takamiya M."/>
            <person name="Ohfuku Y."/>
            <person name="Funahashi T."/>
            <person name="Tanaka T."/>
            <person name="Kudoh Y."/>
            <person name="Yamazaki J."/>
            <person name="Kushida N."/>
            <person name="Oguchi A."/>
            <person name="Aoki K."/>
            <person name="Yoshizawa T."/>
            <person name="Nakamura Y."/>
            <person name="Robb F.T."/>
            <person name="Horikoshi K."/>
            <person name="Masuchi Y."/>
            <person name="Shizuya H."/>
            <person name="Kikuchi H."/>
        </authorList>
    </citation>
    <scope>NUCLEOTIDE SEQUENCE [LARGE SCALE GENOMIC DNA]</scope>
    <source>
        <strain>ATCC 700860 / DSM 12428 / JCM 9974 / NBRC 100139 / OT-3</strain>
    </source>
</reference>
<reference key="2">
    <citation type="journal article" date="2002" name="Structure">
        <title>A hyperthermostable D-ribose-5-phosphate isomerase from Pyrococcus horikoshii characterization and three-dimensional structure.</title>
        <authorList>
            <person name="Ishikawa K."/>
            <person name="Matsui I."/>
            <person name="Payan F."/>
            <person name="Cambillau C."/>
            <person name="Ishida H."/>
            <person name="Kawarabayasi Y."/>
            <person name="Kikuchi H."/>
            <person name="Roussel A."/>
        </authorList>
    </citation>
    <scope>X-RAY CRYSTALLOGRAPHY (1.75 ANGSTROMS) IN COMPLEX WITH SUBSTRATE ANALOGS</scope>
    <scope>FUNCTION</scope>
    <scope>CATALYTIC ACTIVITY</scope>
    <scope>MUTAGENESIS OF ASP-85; ARG-100; GLU-107; LYS-125 AND ASP-168</scope>
    <scope>ACTIVE SITE</scope>
    <scope>BIOPHYSICOCHEMICAL PROPERTIES</scope>
    <scope>ACTIVITY REGULATION</scope>
    <scope>SUBUNIT</scope>
</reference>
<keyword id="KW-0002">3D-structure</keyword>
<keyword id="KW-0413">Isomerase</keyword>
<proteinExistence type="evidence at protein level"/>
<protein>
    <recommendedName>
        <fullName evidence="1">Ribose-5-phosphate isomerase A</fullName>
        <ecNumber evidence="1 2">5.3.1.6</ecNumber>
    </recommendedName>
    <alternativeName>
        <fullName evidence="1">Phosphoriboisomerase A</fullName>
        <shortName evidence="1">PRI</shortName>
    </alternativeName>
</protein>
<feature type="chain" id="PRO_0000158517" description="Ribose-5-phosphate isomerase A">
    <location>
        <begin position="1"/>
        <end position="229"/>
    </location>
</feature>
<feature type="active site" description="Proton acceptor" evidence="3">
    <location>
        <position position="107"/>
    </location>
</feature>
<feature type="binding site" evidence="3 4">
    <location>
        <begin position="28"/>
        <end position="31"/>
    </location>
    <ligand>
        <name>substrate</name>
    </ligand>
</feature>
<feature type="binding site" evidence="3 4">
    <location>
        <begin position="85"/>
        <end position="88"/>
    </location>
    <ligand>
        <name>substrate</name>
    </ligand>
</feature>
<feature type="binding site" evidence="3 4">
    <location>
        <begin position="98"/>
        <end position="101"/>
    </location>
    <ligand>
        <name>substrate</name>
    </ligand>
</feature>
<feature type="binding site" evidence="2 4">
    <location>
        <position position="125"/>
    </location>
    <ligand>
        <name>substrate</name>
    </ligand>
</feature>
<feature type="site" description="Plays a direct or indirect catalytic role">
    <location>
        <position position="85"/>
    </location>
</feature>
<feature type="mutagenesis site" description="Strong decrease in the catalytic efficiency and increase in the binding affinity." evidence="2">
    <original>D</original>
    <variation>N</variation>
    <location>
        <position position="85"/>
    </location>
</feature>
<feature type="mutagenesis site" description="2-fold decrease in the catalytic efficiency and strong decrease in the binding affinity." evidence="2">
    <original>R</original>
    <variation>A</variation>
    <location>
        <position position="100"/>
    </location>
</feature>
<feature type="mutagenesis site" description="Loss of activity." evidence="2">
    <original>E</original>
    <variation>Q</variation>
    <location>
        <position position="107"/>
    </location>
</feature>
<feature type="mutagenesis site" description="2-fold decrease in the catalytic efficiency and strong decrease in the binding affinity." evidence="2">
    <original>K</original>
    <variation>A</variation>
    <location>
        <position position="125"/>
    </location>
</feature>
<feature type="mutagenesis site" description="Almost the same catalytic efficiency and binding affinity than wild-type." evidence="2">
    <original>D</original>
    <variation>N</variation>
    <location>
        <position position="168"/>
    </location>
</feature>
<feature type="helix" evidence="5">
    <location>
        <begin position="3"/>
        <end position="14"/>
    </location>
</feature>
<feature type="helix" evidence="5">
    <location>
        <begin position="15"/>
        <end position="17"/>
    </location>
</feature>
<feature type="strand" evidence="5">
    <location>
        <begin position="23"/>
        <end position="26"/>
    </location>
</feature>
<feature type="helix" evidence="5">
    <location>
        <begin position="30"/>
        <end position="44"/>
    </location>
</feature>
<feature type="strand" evidence="5">
    <location>
        <begin position="52"/>
        <end position="57"/>
    </location>
</feature>
<feature type="helix" evidence="5">
    <location>
        <begin position="58"/>
        <end position="66"/>
    </location>
</feature>
<feature type="helix" evidence="5">
    <location>
        <begin position="74"/>
        <end position="76"/>
    </location>
</feature>
<feature type="strand" evidence="5">
    <location>
        <begin position="80"/>
        <end position="85"/>
    </location>
</feature>
<feature type="strand" evidence="5">
    <location>
        <begin position="88"/>
        <end position="90"/>
    </location>
</feature>
<feature type="helix" evidence="5">
    <location>
        <begin position="104"/>
        <end position="112"/>
    </location>
</feature>
<feature type="strand" evidence="5">
    <location>
        <begin position="114"/>
        <end position="122"/>
    </location>
</feature>
<feature type="helix" evidence="5">
    <location>
        <begin position="123"/>
        <end position="125"/>
    </location>
</feature>
<feature type="strand" evidence="5">
    <location>
        <begin position="136"/>
        <end position="140"/>
    </location>
</feature>
<feature type="helix" evidence="5">
    <location>
        <begin position="142"/>
        <end position="144"/>
    </location>
</feature>
<feature type="helix" evidence="5">
    <location>
        <begin position="145"/>
        <end position="151"/>
    </location>
</feature>
<feature type="helix" evidence="5">
    <location>
        <begin position="152"/>
        <end position="155"/>
    </location>
</feature>
<feature type="strand" evidence="5">
    <location>
        <begin position="158"/>
        <end position="161"/>
    </location>
</feature>
<feature type="strand" evidence="5">
    <location>
        <begin position="165"/>
        <end position="170"/>
    </location>
</feature>
<feature type="strand" evidence="5">
    <location>
        <begin position="178"/>
        <end position="183"/>
    </location>
</feature>
<feature type="helix" evidence="5">
    <location>
        <begin position="190"/>
        <end position="198"/>
    </location>
</feature>
<feature type="strand" evidence="5">
    <location>
        <begin position="203"/>
        <end position="209"/>
    </location>
</feature>
<feature type="strand" evidence="5">
    <location>
        <begin position="215"/>
        <end position="220"/>
    </location>
</feature>
<feature type="strand" evidence="5">
    <location>
        <begin position="223"/>
        <end position="228"/>
    </location>
</feature>
<name>RPIA_PYRHO</name>